<reference key="1">
    <citation type="journal article" date="1998" name="Science">
        <title>Complete genome sequence of Treponema pallidum, the syphilis spirochete.</title>
        <authorList>
            <person name="Fraser C.M."/>
            <person name="Norris S.J."/>
            <person name="Weinstock G.M."/>
            <person name="White O."/>
            <person name="Sutton G.G."/>
            <person name="Dodson R.J."/>
            <person name="Gwinn M.L."/>
            <person name="Hickey E.K."/>
            <person name="Clayton R.A."/>
            <person name="Ketchum K.A."/>
            <person name="Sodergren E."/>
            <person name="Hardham J.M."/>
            <person name="McLeod M.P."/>
            <person name="Salzberg S.L."/>
            <person name="Peterson J.D."/>
            <person name="Khalak H.G."/>
            <person name="Richardson D.L."/>
            <person name="Howell J.K."/>
            <person name="Chidambaram M."/>
            <person name="Utterback T.R."/>
            <person name="McDonald L.A."/>
            <person name="Artiach P."/>
            <person name="Bowman C."/>
            <person name="Cotton M.D."/>
            <person name="Fujii C."/>
            <person name="Garland S.A."/>
            <person name="Hatch B."/>
            <person name="Horst K."/>
            <person name="Roberts K.M."/>
            <person name="Sandusky M."/>
            <person name="Weidman J.F."/>
            <person name="Smith H.O."/>
            <person name="Venter J.C."/>
        </authorList>
    </citation>
    <scope>NUCLEOTIDE SEQUENCE [LARGE SCALE GENOMIC DNA]</scope>
    <source>
        <strain>Nichols</strain>
    </source>
</reference>
<dbReference type="EMBL" id="AE000520">
    <property type="protein sequence ID" value="AAC65308.1"/>
    <property type="molecule type" value="Genomic_DNA"/>
</dbReference>
<dbReference type="PIR" id="A71341">
    <property type="entry name" value="A71341"/>
</dbReference>
<dbReference type="IntAct" id="O83340">
    <property type="interactions" value="10"/>
</dbReference>
<dbReference type="STRING" id="243276.TP_0320"/>
<dbReference type="TCDB" id="3.A.1.2.10">
    <property type="family name" value="the atp-binding cassette (abc) superfamily"/>
</dbReference>
<dbReference type="EnsemblBacteria" id="AAC65308">
    <property type="protein sequence ID" value="AAC65308"/>
    <property type="gene ID" value="TP_0320"/>
</dbReference>
<dbReference type="KEGG" id="tpa:TP_0320"/>
<dbReference type="KEGG" id="tpw:TPANIC_0320"/>
<dbReference type="HOGENOM" id="CLU_3159008_0_0_12"/>
<dbReference type="Proteomes" id="UP000000811">
    <property type="component" value="Chromosome"/>
</dbReference>
<feature type="chain" id="PRO_0000202235" description="Uncharacterized protein TP_0320">
    <location>
        <begin position="1"/>
        <end position="51"/>
    </location>
</feature>
<protein>
    <recommendedName>
        <fullName>Uncharacterized protein TP_0320</fullName>
    </recommendedName>
</protein>
<accession>O83340</accession>
<proteinExistence type="predicted"/>
<name>Y320_TREPA</name>
<organism>
    <name type="scientific">Treponema pallidum (strain Nichols)</name>
    <dbReference type="NCBI Taxonomy" id="243276"/>
    <lineage>
        <taxon>Bacteria</taxon>
        <taxon>Pseudomonadati</taxon>
        <taxon>Spirochaetota</taxon>
        <taxon>Spirochaetia</taxon>
        <taxon>Spirochaetales</taxon>
        <taxon>Treponemataceae</taxon>
        <taxon>Treponema</taxon>
    </lineage>
</organism>
<gene>
    <name type="ordered locus">TP_0320</name>
</gene>
<keyword id="KW-1185">Reference proteome</keyword>
<sequence length="51" mass="5332">MPPVPARGRPSSSSDFCLYGMAVVNGFCVQDIPYGSRVVLPGRMRSSSAGA</sequence>